<evidence type="ECO:0000250" key="1"/>
<evidence type="ECO:0000255" key="2">
    <source>
        <dbReference type="HAMAP-Rule" id="MF_01318"/>
    </source>
</evidence>
<evidence type="ECO:0000269" key="3">
    <source>
    </source>
</evidence>
<evidence type="ECO:0000269" key="4">
    <source>
    </source>
</evidence>
<evidence type="ECO:0000269" key="5">
    <source>
    </source>
</evidence>
<evidence type="ECO:0000305" key="6"/>
<evidence type="ECO:0007829" key="7">
    <source>
        <dbReference type="PDB" id="4REO"/>
    </source>
</evidence>
<keyword id="KW-0002">3D-structure</keyword>
<keyword id="KW-0903">Direct protein sequencing</keyword>
<keyword id="KW-0678">Repressor</keyword>
<keyword id="KW-0687">Ribonucleoprotein</keyword>
<keyword id="KW-0689">Ribosomal protein</keyword>
<keyword id="KW-0694">RNA-binding</keyword>
<keyword id="KW-0699">rRNA-binding</keyword>
<keyword id="KW-0810">Translation regulation</keyword>
<keyword id="KW-0820">tRNA-binding</keyword>
<name>RL1_THETH</name>
<proteinExistence type="evidence at protein level"/>
<reference key="1">
    <citation type="submission" date="1994-09" db="EMBL/GenBank/DDBJ databases">
        <title>Cloning and overexpression of the ribosomal protein L1 gene from Thermus thermophilus VK1. Crystallization of the recombinant protein L1.</title>
        <authorList>
            <person name="Ossina N."/>
            <person name="Eliseikina I.A."/>
            <person name="Garber M.B."/>
            <person name="Jonsson B.-H."/>
        </authorList>
    </citation>
    <scope>NUCLEOTIDE SEQUENCE [GENOMIC DNA]</scope>
    <source>
        <strain>VK1</strain>
    </source>
</reference>
<reference key="2">
    <citation type="journal article" date="1993" name="J. Protein Chem.">
        <title>The complete primary structure of ribosomal protein L1 from Thermus thermophilus.</title>
        <authorList>
            <person name="Amons R."/>
            <person name="Muranova T.A."/>
            <person name="Rykunova A.I."/>
            <person name="Eliseikina I.A."/>
            <person name="Sedelnikova S.E."/>
        </authorList>
    </citation>
    <scope>PROTEIN SEQUENCE OF 2-229</scope>
</reference>
<reference key="3">
    <citation type="journal article" date="1992" name="Biochimie">
        <title>Ribosomal proteins from Thermus thermophilus for structural investigations.</title>
        <authorList>
            <person name="Garber M.B."/>
            <person name="Agalarov S.C."/>
            <person name="Eliseikina I.A."/>
            <person name="Fomenkova N.P."/>
            <person name="Nikonov S.V."/>
            <person name="Sedelnikova S.E."/>
            <person name="Shikaeva O.S."/>
            <person name="Vasiliev D."/>
            <person name="Zhdanov A.S."/>
            <person name="Liljas A."/>
            <person name="Svensson L.A."/>
        </authorList>
    </citation>
    <scope>PROTEIN SEQUENCE OF 2-16</scope>
    <source>
        <strain>VK1</strain>
    </source>
</reference>
<reference key="4">
    <citation type="journal article" date="1998" name="Eur. J. Biochem.">
        <title>Interaction of ribosomal L1 proteins from mesophilic and thermophilic Archaea and Bacteria with specific L1-binding sites on 23S rRNA and mRNA.</title>
        <authorList>
            <person name="Koehrer C."/>
            <person name="Mayer C."/>
            <person name="Neumair O."/>
            <person name="Groebner P."/>
            <person name="Piendl W."/>
        </authorList>
    </citation>
    <scope>BINDING TO METHANOCOCCUS VANNIELII 23S RRNA AND TO M.VANNIELII L1 MRNA</scope>
    <source>
        <strain>VK1</strain>
    </source>
</reference>
<reference key="5">
    <citation type="journal article" date="1996" name="EMBO J.">
        <title>Crystal structure of the RNA binding ribosomal protein L1 from Thermus thermophilus.</title>
        <authorList>
            <person name="Nikonov S.V."/>
            <person name="Nevskaya N."/>
            <person name="Eliseikina I.A."/>
            <person name="Fomenkova N.P."/>
            <person name="Nikulin A."/>
            <person name="Ossina N."/>
            <person name="Garber M.B."/>
            <person name="Jonsson B.-H."/>
            <person name="Briand C."/>
            <person name="Al-Karadaghi S."/>
            <person name="Svensson L.A."/>
            <person name="Aevarsson A."/>
            <person name="Liljas A."/>
        </authorList>
    </citation>
    <scope>X-RAY CRYSTALLOGRAPHY (1.85 ANGSTROMS)</scope>
    <source>
        <strain>VK1</strain>
    </source>
</reference>
<reference key="6">
    <citation type="journal article" date="1997" name="FEBS Lett.">
        <title>A mutant form of the ribosomal protein L1 reveals conformational flexibility.</title>
        <authorList>
            <person name="Unge J."/>
            <person name="Al-Karadaghi S."/>
            <person name="Liljas A."/>
            <person name="Jonsson B.H."/>
            <person name="Eliseikina I."/>
            <person name="Ossina N."/>
            <person name="Nevskaya N."/>
            <person name="Fomenkova N."/>
            <person name="Garber M."/>
            <person name="Nikonov S."/>
        </authorList>
    </citation>
    <scope>X-RAY CRYSTALLOGRAPHY (1.9 ANGSTROMS) OF MUTANT CYS-180</scope>
</reference>
<reference key="7">
    <citation type="journal article" date="2006" name="J. Mol. Biol.">
        <title>New insights into the interaction of ribosomal protein L1 with RNA.</title>
        <authorList>
            <person name="Nevskaya N."/>
            <person name="Tishchenko S."/>
            <person name="Volchkov S."/>
            <person name="Kljashtorny V."/>
            <person name="Nikonova E."/>
            <person name="Nikonov O."/>
            <person name="Nikulin A."/>
            <person name="Kohrer C."/>
            <person name="Piendl W."/>
            <person name="Zimmermann R."/>
            <person name="Stockley P."/>
            <person name="Garber M.B."/>
            <person name="Nikonov S."/>
        </authorList>
    </citation>
    <scope>X-RAY CRYSTALLOGRAPHY (2.6 ANGSTROMS) IN COMPLEX WITH A M.VANNIELII L1 MRNA FRAGMENT</scope>
    <source>
        <strain>VK1</strain>
    </source>
</reference>
<reference key="8">
    <citation type="journal article" date="2000" name="Cell">
        <title>Solution structure of the E. coli 70S ribosome at 11.5 A resolution.</title>
        <authorList>
            <person name="Gabashvili I.S."/>
            <person name="Agrawal R.K."/>
            <person name="Spahn C.M."/>
            <person name="Grassucci R.A."/>
            <person name="Svergun D.I."/>
            <person name="Frank J."/>
            <person name="Penczek P."/>
        </authorList>
    </citation>
    <scope>STRUCTURE BY ELECTRON MICROSCOPY (11.5 ANGSTROMS)</scope>
</reference>
<sequence length="229" mass="24826">MPKHGKRYRALLEKVDPNKIYTIDEAAHLVKELATAKFDETVEVHAKLGIDPRRSDQNVRGTVSLPHGLGKQVRVLAIAKGEKIKEAEEAGADYVGGEEIIQKILDGWMDFDAVVATPDVMGAVGSKLGRILGPRGLLPNPKAGTVGFNIGEIIREIKAGRIEFRNDKTGAIHAPVGKASFPPEKLADNIRAFIRALEAHKPEGAKGTFLRSVYVTTTMGPSVRINPHS</sequence>
<feature type="initiator methionine" description="Removed" evidence="4 5">
    <location>
        <position position="1"/>
    </location>
</feature>
<feature type="chain" id="PRO_0000125765" description="Large ribosomal subunit protein uL1">
    <location>
        <begin position="2"/>
        <end position="229"/>
    </location>
</feature>
<feature type="sequence conflict" description="In Ref. 3; AA sequence." evidence="6" ref="3">
    <original>P</original>
    <variation>V</variation>
    <location>
        <position position="2"/>
    </location>
</feature>
<feature type="sequence conflict" description="In Ref. 3; AA sequence." evidence="6" ref="3">
    <original>HG</original>
    <variation>TN</variation>
    <location>
        <begin position="4"/>
        <end position="5"/>
    </location>
</feature>
<feature type="sequence conflict" description="In Ref. 3; AA sequence." evidence="6" ref="3">
    <original>K</original>
    <variation>F</variation>
    <location>
        <position position="14"/>
    </location>
</feature>
<feature type="helix" evidence="7">
    <location>
        <begin position="11"/>
        <end position="13"/>
    </location>
</feature>
<feature type="helix" evidence="7">
    <location>
        <begin position="23"/>
        <end position="33"/>
    </location>
</feature>
<feature type="strand" evidence="7">
    <location>
        <begin position="36"/>
        <end position="38"/>
    </location>
</feature>
<feature type="strand" evidence="7">
    <location>
        <begin position="41"/>
        <end position="50"/>
    </location>
</feature>
<feature type="helix" evidence="7">
    <location>
        <begin position="55"/>
        <end position="57"/>
    </location>
</feature>
<feature type="strand" evidence="7">
    <location>
        <begin position="60"/>
        <end position="64"/>
    </location>
</feature>
<feature type="strand" evidence="7">
    <location>
        <begin position="66"/>
        <end position="68"/>
    </location>
</feature>
<feature type="strand" evidence="7">
    <location>
        <begin position="75"/>
        <end position="78"/>
    </location>
</feature>
<feature type="helix" evidence="7">
    <location>
        <begin position="82"/>
        <end position="89"/>
    </location>
</feature>
<feature type="strand" evidence="7">
    <location>
        <begin position="93"/>
        <end position="96"/>
    </location>
</feature>
<feature type="helix" evidence="7">
    <location>
        <begin position="100"/>
        <end position="105"/>
    </location>
</feature>
<feature type="strand" evidence="7">
    <location>
        <begin position="112"/>
        <end position="116"/>
    </location>
</feature>
<feature type="helix" evidence="7">
    <location>
        <begin position="118"/>
        <end position="120"/>
    </location>
</feature>
<feature type="helix" evidence="7">
    <location>
        <begin position="121"/>
        <end position="135"/>
    </location>
</feature>
<feature type="helix" evidence="7">
    <location>
        <begin position="141"/>
        <end position="143"/>
    </location>
</feature>
<feature type="strand" evidence="7">
    <location>
        <begin position="146"/>
        <end position="148"/>
    </location>
</feature>
<feature type="helix" evidence="7">
    <location>
        <begin position="150"/>
        <end position="158"/>
    </location>
</feature>
<feature type="strand" evidence="7">
    <location>
        <begin position="161"/>
        <end position="165"/>
    </location>
</feature>
<feature type="strand" evidence="7">
    <location>
        <begin position="170"/>
        <end position="178"/>
    </location>
</feature>
<feature type="helix" evidence="7">
    <location>
        <begin position="183"/>
        <end position="199"/>
    </location>
</feature>
<feature type="strand" evidence="7">
    <location>
        <begin position="209"/>
        <end position="216"/>
    </location>
</feature>
<feature type="strand" evidence="7">
    <location>
        <begin position="218"/>
        <end position="220"/>
    </location>
</feature>
<feature type="strand" evidence="7">
    <location>
        <begin position="223"/>
        <end position="225"/>
    </location>
</feature>
<organism>
    <name type="scientific">Thermus thermophilus</name>
    <dbReference type="NCBI Taxonomy" id="274"/>
    <lineage>
        <taxon>Bacteria</taxon>
        <taxon>Thermotogati</taxon>
        <taxon>Deinococcota</taxon>
        <taxon>Deinococci</taxon>
        <taxon>Thermales</taxon>
        <taxon>Thermaceae</taxon>
        <taxon>Thermus</taxon>
    </lineage>
</organism>
<protein>
    <recommendedName>
        <fullName evidence="2">Large ribosomal subunit protein uL1</fullName>
    </recommendedName>
    <alternativeName>
        <fullName evidence="6">50S ribosomal protein L1</fullName>
    </alternativeName>
</protein>
<dbReference type="EMBL" id="X81375">
    <property type="protein sequence ID" value="CAA57139.1"/>
    <property type="molecule type" value="Genomic_DNA"/>
</dbReference>
<dbReference type="PIR" id="S66577">
    <property type="entry name" value="S66577"/>
</dbReference>
<dbReference type="RefSeq" id="WP_011174098.1">
    <property type="nucleotide sequence ID" value="NZ_CP144687.1"/>
</dbReference>
<dbReference type="PDB" id="1AD2">
    <property type="method" value="X-ray"/>
    <property type="resolution" value="1.90 A"/>
    <property type="chains" value="A=2-229"/>
</dbReference>
<dbReference type="PDB" id="1ZHO">
    <property type="method" value="X-ray"/>
    <property type="resolution" value="2.60 A"/>
    <property type="chains" value="A/C/E/G=2-229"/>
</dbReference>
<dbReference type="PDB" id="2HW8">
    <property type="method" value="X-ray"/>
    <property type="resolution" value="2.10 A"/>
    <property type="chains" value="A=2-229"/>
</dbReference>
<dbReference type="PDB" id="2OUM">
    <property type="method" value="X-ray"/>
    <property type="resolution" value="2.55 A"/>
    <property type="chains" value="A=2-229"/>
</dbReference>
<dbReference type="PDB" id="2OV7">
    <property type="method" value="X-ray"/>
    <property type="resolution" value="2.30 A"/>
    <property type="chains" value="A/B/C=2-229"/>
</dbReference>
<dbReference type="PDB" id="2VPL">
    <property type="method" value="X-ray"/>
    <property type="resolution" value="2.30 A"/>
    <property type="chains" value="A/C=2-229"/>
</dbReference>
<dbReference type="PDB" id="3U4M">
    <property type="method" value="X-ray"/>
    <property type="resolution" value="2.00 A"/>
    <property type="chains" value="A=1-229"/>
</dbReference>
<dbReference type="PDB" id="3U56">
    <property type="method" value="X-ray"/>
    <property type="resolution" value="2.10 A"/>
    <property type="chains" value="A=1-229"/>
</dbReference>
<dbReference type="PDB" id="3UMY">
    <property type="method" value="X-ray"/>
    <property type="resolution" value="1.90 A"/>
    <property type="chains" value="A=2-229"/>
</dbReference>
<dbReference type="PDB" id="4F9T">
    <property type="method" value="X-ray"/>
    <property type="resolution" value="1.46 A"/>
    <property type="chains" value="A=1-229"/>
</dbReference>
<dbReference type="PDB" id="4QG3">
    <property type="method" value="X-ray"/>
    <property type="resolution" value="2.00 A"/>
    <property type="chains" value="A=2-229"/>
</dbReference>
<dbReference type="PDB" id="4QGB">
    <property type="method" value="X-ray"/>
    <property type="resolution" value="2.60 A"/>
    <property type="chains" value="A/B=14-229"/>
</dbReference>
<dbReference type="PDB" id="4QVI">
    <property type="method" value="X-ray"/>
    <property type="resolution" value="1.90 A"/>
    <property type="chains" value="A=1-229"/>
</dbReference>
<dbReference type="PDB" id="4REO">
    <property type="method" value="X-ray"/>
    <property type="resolution" value="1.35 A"/>
    <property type="chains" value="A=1-229"/>
</dbReference>
<dbReference type="PDB" id="5IB7">
    <property type="method" value="X-ray"/>
    <property type="resolution" value="2.99 A"/>
    <property type="chains" value="71=1-229"/>
</dbReference>
<dbReference type="PDB" id="5IB8">
    <property type="method" value="X-ray"/>
    <property type="resolution" value="3.13 A"/>
    <property type="chains" value="71=1-229"/>
</dbReference>
<dbReference type="PDB" id="5IBB">
    <property type="method" value="X-ray"/>
    <property type="resolution" value="2.96 A"/>
    <property type="chains" value="71/79=1-229"/>
</dbReference>
<dbReference type="PDB" id="5IMQ">
    <property type="method" value="EM"/>
    <property type="resolution" value="3.80 A"/>
    <property type="chains" value="Z=1-229"/>
</dbReference>
<dbReference type="PDB" id="5IMR">
    <property type="method" value="EM"/>
    <property type="chains" value="Z=1-229"/>
</dbReference>
<dbReference type="PDB" id="5J8B">
    <property type="method" value="X-ray"/>
    <property type="resolution" value="2.60 A"/>
    <property type="chains" value="C=2-229"/>
</dbReference>
<dbReference type="PDB" id="7A5F">
    <property type="method" value="EM"/>
    <property type="resolution" value="4.40 A"/>
    <property type="chains" value="n=1-229"/>
</dbReference>
<dbReference type="PDB" id="7A5G">
    <property type="method" value="EM"/>
    <property type="resolution" value="4.33 A"/>
    <property type="chains" value="n=1-229"/>
</dbReference>
<dbReference type="PDB" id="7A5J">
    <property type="method" value="EM"/>
    <property type="resolution" value="3.10 A"/>
    <property type="chains" value="n=1-229"/>
</dbReference>
<dbReference type="PDBsum" id="1AD2"/>
<dbReference type="PDBsum" id="1ZHO"/>
<dbReference type="PDBsum" id="2HW8"/>
<dbReference type="PDBsum" id="2OUM"/>
<dbReference type="PDBsum" id="2OV7"/>
<dbReference type="PDBsum" id="2VPL"/>
<dbReference type="PDBsum" id="3U4M"/>
<dbReference type="PDBsum" id="3U56"/>
<dbReference type="PDBsum" id="3UMY"/>
<dbReference type="PDBsum" id="4F9T"/>
<dbReference type="PDBsum" id="4QG3"/>
<dbReference type="PDBsum" id="4QGB"/>
<dbReference type="PDBsum" id="4QVI"/>
<dbReference type="PDBsum" id="4REO"/>
<dbReference type="PDBsum" id="5IB7"/>
<dbReference type="PDBsum" id="5IB8"/>
<dbReference type="PDBsum" id="5IBB"/>
<dbReference type="PDBsum" id="5IMQ"/>
<dbReference type="PDBsum" id="5IMR"/>
<dbReference type="PDBsum" id="5J8B"/>
<dbReference type="PDBsum" id="7A5F"/>
<dbReference type="PDBsum" id="7A5G"/>
<dbReference type="PDBsum" id="7A5J"/>
<dbReference type="EMDB" id="EMD-11645"/>
<dbReference type="SMR" id="P27150"/>
<dbReference type="EvolutionaryTrace" id="P27150"/>
<dbReference type="GO" id="GO:0015934">
    <property type="term" value="C:large ribosomal subunit"/>
    <property type="evidence" value="ECO:0007669"/>
    <property type="project" value="InterPro"/>
</dbReference>
<dbReference type="GO" id="GO:0019843">
    <property type="term" value="F:rRNA binding"/>
    <property type="evidence" value="ECO:0007669"/>
    <property type="project" value="UniProtKB-UniRule"/>
</dbReference>
<dbReference type="GO" id="GO:0003735">
    <property type="term" value="F:structural constituent of ribosome"/>
    <property type="evidence" value="ECO:0007669"/>
    <property type="project" value="InterPro"/>
</dbReference>
<dbReference type="GO" id="GO:0000049">
    <property type="term" value="F:tRNA binding"/>
    <property type="evidence" value="ECO:0007669"/>
    <property type="project" value="UniProtKB-KW"/>
</dbReference>
<dbReference type="GO" id="GO:0006417">
    <property type="term" value="P:regulation of translation"/>
    <property type="evidence" value="ECO:0007669"/>
    <property type="project" value="UniProtKB-KW"/>
</dbReference>
<dbReference type="GO" id="GO:0006412">
    <property type="term" value="P:translation"/>
    <property type="evidence" value="ECO:0007669"/>
    <property type="project" value="UniProtKB-UniRule"/>
</dbReference>
<dbReference type="CDD" id="cd00403">
    <property type="entry name" value="Ribosomal_L1"/>
    <property type="match status" value="1"/>
</dbReference>
<dbReference type="FunFam" id="3.40.50.790:FF:000001">
    <property type="entry name" value="50S ribosomal protein L1"/>
    <property type="match status" value="1"/>
</dbReference>
<dbReference type="Gene3D" id="3.30.190.20">
    <property type="match status" value="1"/>
</dbReference>
<dbReference type="Gene3D" id="3.40.50.790">
    <property type="match status" value="1"/>
</dbReference>
<dbReference type="HAMAP" id="MF_01318_B">
    <property type="entry name" value="Ribosomal_uL1_B"/>
    <property type="match status" value="1"/>
</dbReference>
<dbReference type="InterPro" id="IPR005878">
    <property type="entry name" value="Ribosom_uL1_bac-type"/>
</dbReference>
<dbReference type="InterPro" id="IPR002143">
    <property type="entry name" value="Ribosomal_uL1"/>
</dbReference>
<dbReference type="InterPro" id="IPR023674">
    <property type="entry name" value="Ribosomal_uL1-like"/>
</dbReference>
<dbReference type="InterPro" id="IPR028364">
    <property type="entry name" value="Ribosomal_uL1/biogenesis"/>
</dbReference>
<dbReference type="InterPro" id="IPR016095">
    <property type="entry name" value="Ribosomal_uL1_3-a/b-sand"/>
</dbReference>
<dbReference type="InterPro" id="IPR023673">
    <property type="entry name" value="Ribosomal_uL1_CS"/>
</dbReference>
<dbReference type="NCBIfam" id="TIGR01169">
    <property type="entry name" value="rplA_bact"/>
    <property type="match status" value="1"/>
</dbReference>
<dbReference type="PANTHER" id="PTHR36427">
    <property type="entry name" value="54S RIBOSOMAL PROTEIN L1, MITOCHONDRIAL"/>
    <property type="match status" value="1"/>
</dbReference>
<dbReference type="PANTHER" id="PTHR36427:SF3">
    <property type="entry name" value="LARGE RIBOSOMAL SUBUNIT PROTEIN UL1M"/>
    <property type="match status" value="1"/>
</dbReference>
<dbReference type="Pfam" id="PF00687">
    <property type="entry name" value="Ribosomal_L1"/>
    <property type="match status" value="1"/>
</dbReference>
<dbReference type="PIRSF" id="PIRSF002155">
    <property type="entry name" value="Ribosomal_L1"/>
    <property type="match status" value="1"/>
</dbReference>
<dbReference type="SUPFAM" id="SSF56808">
    <property type="entry name" value="Ribosomal protein L1"/>
    <property type="match status" value="1"/>
</dbReference>
<dbReference type="PROSITE" id="PS01199">
    <property type="entry name" value="RIBOSOMAL_L1"/>
    <property type="match status" value="1"/>
</dbReference>
<accession>P27150</accession>
<gene>
    <name evidence="2" type="primary">rplA</name>
    <name evidence="2" type="synonym">rpl1</name>
</gene>
<comment type="function">
    <text evidence="1">The L1 stalk is quite mobile in the ribosome, and is involved in E site tRNA release (By similarity). Binds directly to 23S rRNA.</text>
</comment>
<comment type="function">
    <text evidence="2">Protein L1 is also a translational repressor protein, it controls the translation of the L11 operon by binding to its mRNA.</text>
</comment>
<comment type="subunit">
    <text evidence="2 3">Part of the 50S ribosomal subunit.</text>
</comment>
<comment type="similarity">
    <text evidence="2">Belongs to the universal ribosomal protein uL1 family.</text>
</comment>